<sequence>METAIEWITAHEILDSRGRPTLEALVGLANGATGLAQVPSGASTGTFEAHELRDGDPKRYGGKGVLRAVENILGPIQSELQGEDALNQARIDQLLIDLDGTPNKSRLGANAILAVSLATAKAAAEAVGLPLYKYLGGPFANLLPVPLMNVLNGGAHADNNVDIQEFMLVPIGAASFREALRYGAEVFAVLKQVLQQKGLSTGVGDEGGFAPDLDSNAAALDLLMTAIEQAGYKPGADIALALDVAANELLQDGQYHFEGKAHSAADMVAYYQQLLANYPILSIEDGLAEEDWAGWQAMTAQLGSRVQLVGDDLFVTNLTRLQKGIDSAAANAILIKPNQIGTLTETVSAIQLAVQAGFRTIISHRSGETEDTTIADLAVATRAGQIKTGSLCRSERIAKYNQLLRIEDELGEAAVYAGRVGLGPRAR</sequence>
<organism>
    <name type="scientific">Synechococcus sp. (strain JA-2-3B'a(2-13))</name>
    <name type="common">Cyanobacteria bacterium Yellowstone B-Prime</name>
    <dbReference type="NCBI Taxonomy" id="321332"/>
    <lineage>
        <taxon>Bacteria</taxon>
        <taxon>Bacillati</taxon>
        <taxon>Cyanobacteriota</taxon>
        <taxon>Cyanophyceae</taxon>
        <taxon>Synechococcales</taxon>
        <taxon>Synechococcaceae</taxon>
        <taxon>Synechococcus</taxon>
    </lineage>
</organism>
<keyword id="KW-0963">Cytoplasm</keyword>
<keyword id="KW-0324">Glycolysis</keyword>
<keyword id="KW-0456">Lyase</keyword>
<keyword id="KW-0460">Magnesium</keyword>
<keyword id="KW-0479">Metal-binding</keyword>
<keyword id="KW-1185">Reference proteome</keyword>
<keyword id="KW-0964">Secreted</keyword>
<feature type="chain" id="PRO_0000267124" description="Enolase">
    <location>
        <begin position="1"/>
        <end position="427"/>
    </location>
</feature>
<feature type="active site" description="Proton donor" evidence="1">
    <location>
        <position position="206"/>
    </location>
</feature>
<feature type="active site" description="Proton acceptor" evidence="1">
    <location>
        <position position="336"/>
    </location>
</feature>
<feature type="binding site" evidence="1">
    <location>
        <position position="164"/>
    </location>
    <ligand>
        <name>(2R)-2-phosphoglycerate</name>
        <dbReference type="ChEBI" id="CHEBI:58289"/>
    </ligand>
</feature>
<feature type="binding site" evidence="1">
    <location>
        <position position="243"/>
    </location>
    <ligand>
        <name>Mg(2+)</name>
        <dbReference type="ChEBI" id="CHEBI:18420"/>
    </ligand>
</feature>
<feature type="binding site" evidence="1">
    <location>
        <position position="284"/>
    </location>
    <ligand>
        <name>Mg(2+)</name>
        <dbReference type="ChEBI" id="CHEBI:18420"/>
    </ligand>
</feature>
<feature type="binding site" evidence="1">
    <location>
        <position position="311"/>
    </location>
    <ligand>
        <name>Mg(2+)</name>
        <dbReference type="ChEBI" id="CHEBI:18420"/>
    </ligand>
</feature>
<feature type="binding site" evidence="1">
    <location>
        <position position="336"/>
    </location>
    <ligand>
        <name>(2R)-2-phosphoglycerate</name>
        <dbReference type="ChEBI" id="CHEBI:58289"/>
    </ligand>
</feature>
<feature type="binding site" evidence="1">
    <location>
        <position position="365"/>
    </location>
    <ligand>
        <name>(2R)-2-phosphoglycerate</name>
        <dbReference type="ChEBI" id="CHEBI:58289"/>
    </ligand>
</feature>
<feature type="binding site" evidence="1">
    <location>
        <position position="366"/>
    </location>
    <ligand>
        <name>(2R)-2-phosphoglycerate</name>
        <dbReference type="ChEBI" id="CHEBI:58289"/>
    </ligand>
</feature>
<feature type="binding site" evidence="1">
    <location>
        <position position="387"/>
    </location>
    <ligand>
        <name>(2R)-2-phosphoglycerate</name>
        <dbReference type="ChEBI" id="CHEBI:58289"/>
    </ligand>
</feature>
<evidence type="ECO:0000255" key="1">
    <source>
        <dbReference type="HAMAP-Rule" id="MF_00318"/>
    </source>
</evidence>
<gene>
    <name evidence="1" type="primary">eno</name>
    <name type="ordered locus">CYB_2531</name>
</gene>
<protein>
    <recommendedName>
        <fullName evidence="1">Enolase</fullName>
        <ecNumber evidence="1">4.2.1.11</ecNumber>
    </recommendedName>
    <alternativeName>
        <fullName evidence="1">2-phospho-D-glycerate hydro-lyase</fullName>
    </alternativeName>
    <alternativeName>
        <fullName evidence="1">2-phosphoglycerate dehydratase</fullName>
    </alternativeName>
</protein>
<proteinExistence type="inferred from homology"/>
<accession>Q2JIT3</accession>
<name>ENO_SYNJB</name>
<comment type="function">
    <text evidence="1">Catalyzes the reversible conversion of 2-phosphoglycerate (2-PG) into phosphoenolpyruvate (PEP). It is essential for the degradation of carbohydrates via glycolysis.</text>
</comment>
<comment type="catalytic activity">
    <reaction evidence="1">
        <text>(2R)-2-phosphoglycerate = phosphoenolpyruvate + H2O</text>
        <dbReference type="Rhea" id="RHEA:10164"/>
        <dbReference type="ChEBI" id="CHEBI:15377"/>
        <dbReference type="ChEBI" id="CHEBI:58289"/>
        <dbReference type="ChEBI" id="CHEBI:58702"/>
        <dbReference type="EC" id="4.2.1.11"/>
    </reaction>
</comment>
<comment type="cofactor">
    <cofactor evidence="1">
        <name>Mg(2+)</name>
        <dbReference type="ChEBI" id="CHEBI:18420"/>
    </cofactor>
    <text evidence="1">Binds a second Mg(2+) ion via substrate during catalysis.</text>
</comment>
<comment type="pathway">
    <text evidence="1">Carbohydrate degradation; glycolysis; pyruvate from D-glyceraldehyde 3-phosphate: step 4/5.</text>
</comment>
<comment type="subcellular location">
    <subcellularLocation>
        <location evidence="1">Cytoplasm</location>
    </subcellularLocation>
    <subcellularLocation>
        <location evidence="1">Secreted</location>
    </subcellularLocation>
    <subcellularLocation>
        <location evidence="1">Cell surface</location>
    </subcellularLocation>
    <text evidence="1">Fractions of enolase are present in both the cytoplasm and on the cell surface.</text>
</comment>
<comment type="similarity">
    <text evidence="1">Belongs to the enolase family.</text>
</comment>
<dbReference type="EC" id="4.2.1.11" evidence="1"/>
<dbReference type="EMBL" id="CP000240">
    <property type="protein sequence ID" value="ABD03465.1"/>
    <property type="molecule type" value="Genomic_DNA"/>
</dbReference>
<dbReference type="RefSeq" id="WP_011434092.1">
    <property type="nucleotide sequence ID" value="NC_007776.1"/>
</dbReference>
<dbReference type="SMR" id="Q2JIT3"/>
<dbReference type="STRING" id="321332.CYB_2531"/>
<dbReference type="KEGG" id="cyb:CYB_2531"/>
<dbReference type="eggNOG" id="COG0148">
    <property type="taxonomic scope" value="Bacteria"/>
</dbReference>
<dbReference type="HOGENOM" id="CLU_031223_2_1_3"/>
<dbReference type="OrthoDB" id="9804716at2"/>
<dbReference type="UniPathway" id="UPA00109">
    <property type="reaction ID" value="UER00187"/>
</dbReference>
<dbReference type="Proteomes" id="UP000001938">
    <property type="component" value="Chromosome"/>
</dbReference>
<dbReference type="GO" id="GO:0009986">
    <property type="term" value="C:cell surface"/>
    <property type="evidence" value="ECO:0007669"/>
    <property type="project" value="UniProtKB-SubCell"/>
</dbReference>
<dbReference type="GO" id="GO:0005576">
    <property type="term" value="C:extracellular region"/>
    <property type="evidence" value="ECO:0007669"/>
    <property type="project" value="UniProtKB-SubCell"/>
</dbReference>
<dbReference type="GO" id="GO:0000015">
    <property type="term" value="C:phosphopyruvate hydratase complex"/>
    <property type="evidence" value="ECO:0007669"/>
    <property type="project" value="InterPro"/>
</dbReference>
<dbReference type="GO" id="GO:0000287">
    <property type="term" value="F:magnesium ion binding"/>
    <property type="evidence" value="ECO:0007669"/>
    <property type="project" value="UniProtKB-UniRule"/>
</dbReference>
<dbReference type="GO" id="GO:0004634">
    <property type="term" value="F:phosphopyruvate hydratase activity"/>
    <property type="evidence" value="ECO:0007669"/>
    <property type="project" value="UniProtKB-UniRule"/>
</dbReference>
<dbReference type="GO" id="GO:0006096">
    <property type="term" value="P:glycolytic process"/>
    <property type="evidence" value="ECO:0007669"/>
    <property type="project" value="UniProtKB-UniRule"/>
</dbReference>
<dbReference type="CDD" id="cd03313">
    <property type="entry name" value="enolase"/>
    <property type="match status" value="1"/>
</dbReference>
<dbReference type="FunFam" id="3.20.20.120:FF:000001">
    <property type="entry name" value="Enolase"/>
    <property type="match status" value="1"/>
</dbReference>
<dbReference type="Gene3D" id="3.20.20.120">
    <property type="entry name" value="Enolase-like C-terminal domain"/>
    <property type="match status" value="1"/>
</dbReference>
<dbReference type="Gene3D" id="3.30.390.10">
    <property type="entry name" value="Enolase-like, N-terminal domain"/>
    <property type="match status" value="1"/>
</dbReference>
<dbReference type="HAMAP" id="MF_00318">
    <property type="entry name" value="Enolase"/>
    <property type="match status" value="1"/>
</dbReference>
<dbReference type="InterPro" id="IPR000941">
    <property type="entry name" value="Enolase"/>
</dbReference>
<dbReference type="InterPro" id="IPR036849">
    <property type="entry name" value="Enolase-like_C_sf"/>
</dbReference>
<dbReference type="InterPro" id="IPR029017">
    <property type="entry name" value="Enolase-like_N"/>
</dbReference>
<dbReference type="InterPro" id="IPR020810">
    <property type="entry name" value="Enolase_C"/>
</dbReference>
<dbReference type="InterPro" id="IPR020809">
    <property type="entry name" value="Enolase_CS"/>
</dbReference>
<dbReference type="InterPro" id="IPR020811">
    <property type="entry name" value="Enolase_N"/>
</dbReference>
<dbReference type="NCBIfam" id="TIGR01060">
    <property type="entry name" value="eno"/>
    <property type="match status" value="1"/>
</dbReference>
<dbReference type="PANTHER" id="PTHR11902">
    <property type="entry name" value="ENOLASE"/>
    <property type="match status" value="1"/>
</dbReference>
<dbReference type="PANTHER" id="PTHR11902:SF1">
    <property type="entry name" value="ENOLASE"/>
    <property type="match status" value="1"/>
</dbReference>
<dbReference type="Pfam" id="PF00113">
    <property type="entry name" value="Enolase_C"/>
    <property type="match status" value="1"/>
</dbReference>
<dbReference type="Pfam" id="PF03952">
    <property type="entry name" value="Enolase_N"/>
    <property type="match status" value="1"/>
</dbReference>
<dbReference type="PIRSF" id="PIRSF001400">
    <property type="entry name" value="Enolase"/>
    <property type="match status" value="1"/>
</dbReference>
<dbReference type="PRINTS" id="PR00148">
    <property type="entry name" value="ENOLASE"/>
</dbReference>
<dbReference type="SFLD" id="SFLDS00001">
    <property type="entry name" value="Enolase"/>
    <property type="match status" value="1"/>
</dbReference>
<dbReference type="SFLD" id="SFLDF00002">
    <property type="entry name" value="enolase"/>
    <property type="match status" value="1"/>
</dbReference>
<dbReference type="SMART" id="SM01192">
    <property type="entry name" value="Enolase_C"/>
    <property type="match status" value="1"/>
</dbReference>
<dbReference type="SMART" id="SM01193">
    <property type="entry name" value="Enolase_N"/>
    <property type="match status" value="1"/>
</dbReference>
<dbReference type="SUPFAM" id="SSF51604">
    <property type="entry name" value="Enolase C-terminal domain-like"/>
    <property type="match status" value="1"/>
</dbReference>
<dbReference type="SUPFAM" id="SSF54826">
    <property type="entry name" value="Enolase N-terminal domain-like"/>
    <property type="match status" value="1"/>
</dbReference>
<dbReference type="PROSITE" id="PS00164">
    <property type="entry name" value="ENOLASE"/>
    <property type="match status" value="1"/>
</dbReference>
<reference key="1">
    <citation type="journal article" date="2007" name="ISME J.">
        <title>Population level functional diversity in a microbial community revealed by comparative genomic and metagenomic analyses.</title>
        <authorList>
            <person name="Bhaya D."/>
            <person name="Grossman A.R."/>
            <person name="Steunou A.-S."/>
            <person name="Khuri N."/>
            <person name="Cohan F.M."/>
            <person name="Hamamura N."/>
            <person name="Melendrez M.C."/>
            <person name="Bateson M.M."/>
            <person name="Ward D.M."/>
            <person name="Heidelberg J.F."/>
        </authorList>
    </citation>
    <scope>NUCLEOTIDE SEQUENCE [LARGE SCALE GENOMIC DNA]</scope>
    <source>
        <strain>JA-2-3B'a(2-13)</strain>
    </source>
</reference>